<gene>
    <name evidence="1" type="primary">selA</name>
    <name type="ordered locus">Abu_1524</name>
</gene>
<organism>
    <name type="scientific">Aliarcobacter butzleri (strain RM4018)</name>
    <name type="common">Arcobacter butzleri</name>
    <dbReference type="NCBI Taxonomy" id="367737"/>
    <lineage>
        <taxon>Bacteria</taxon>
        <taxon>Pseudomonadati</taxon>
        <taxon>Campylobacterota</taxon>
        <taxon>Epsilonproteobacteria</taxon>
        <taxon>Campylobacterales</taxon>
        <taxon>Arcobacteraceae</taxon>
        <taxon>Aliarcobacter</taxon>
    </lineage>
</organism>
<dbReference type="EC" id="2.9.1.1" evidence="1"/>
<dbReference type="EMBL" id="CP000361">
    <property type="protein sequence ID" value="ABV67777.1"/>
    <property type="molecule type" value="Genomic_DNA"/>
</dbReference>
<dbReference type="RefSeq" id="WP_012013164.1">
    <property type="nucleotide sequence ID" value="NC_009850.1"/>
</dbReference>
<dbReference type="SMR" id="A8EV04"/>
<dbReference type="STRING" id="367737.Abu_1524"/>
<dbReference type="GeneID" id="24305353"/>
<dbReference type="KEGG" id="abu:Abu_1524"/>
<dbReference type="eggNOG" id="COG1921">
    <property type="taxonomic scope" value="Bacteria"/>
</dbReference>
<dbReference type="HOGENOM" id="CLU_038142_1_0_7"/>
<dbReference type="UniPathway" id="UPA00906">
    <property type="reaction ID" value="UER00896"/>
</dbReference>
<dbReference type="Proteomes" id="UP000001136">
    <property type="component" value="Chromosome"/>
</dbReference>
<dbReference type="GO" id="GO:0005737">
    <property type="term" value="C:cytoplasm"/>
    <property type="evidence" value="ECO:0007669"/>
    <property type="project" value="UniProtKB-SubCell"/>
</dbReference>
<dbReference type="GO" id="GO:0004125">
    <property type="term" value="F:L-seryl-tRNA(Sec) selenium transferase activity"/>
    <property type="evidence" value="ECO:0007669"/>
    <property type="project" value="UniProtKB-UniRule"/>
</dbReference>
<dbReference type="GO" id="GO:0001717">
    <property type="term" value="P:conversion of seryl-tRNAsec to selenocys-tRNAsec"/>
    <property type="evidence" value="ECO:0007669"/>
    <property type="project" value="UniProtKB-UniRule"/>
</dbReference>
<dbReference type="GO" id="GO:0001514">
    <property type="term" value="P:selenocysteine incorporation"/>
    <property type="evidence" value="ECO:0007669"/>
    <property type="project" value="UniProtKB-UniRule"/>
</dbReference>
<dbReference type="Gene3D" id="3.90.1150.180">
    <property type="match status" value="1"/>
</dbReference>
<dbReference type="Gene3D" id="3.40.640.10">
    <property type="entry name" value="Type I PLP-dependent aspartate aminotransferase-like (Major domain)"/>
    <property type="match status" value="1"/>
</dbReference>
<dbReference type="HAMAP" id="MF_00423">
    <property type="entry name" value="SelA"/>
    <property type="match status" value="1"/>
</dbReference>
<dbReference type="InterPro" id="IPR015424">
    <property type="entry name" value="PyrdxlP-dep_Trfase"/>
</dbReference>
<dbReference type="InterPro" id="IPR015421">
    <property type="entry name" value="PyrdxlP-dep_Trfase_major"/>
</dbReference>
<dbReference type="InterPro" id="IPR018319">
    <property type="entry name" value="SelA-like"/>
</dbReference>
<dbReference type="InterPro" id="IPR004534">
    <property type="entry name" value="SelA_trans"/>
</dbReference>
<dbReference type="NCBIfam" id="TIGR00474">
    <property type="entry name" value="selA"/>
    <property type="match status" value="1"/>
</dbReference>
<dbReference type="PANTHER" id="PTHR32328">
    <property type="entry name" value="L-SERYL-TRNA(SEC) SELENIUM TRANSFERASE"/>
    <property type="match status" value="1"/>
</dbReference>
<dbReference type="PANTHER" id="PTHR32328:SF0">
    <property type="entry name" value="L-SERYL-TRNA(SEC) SELENIUM TRANSFERASE"/>
    <property type="match status" value="1"/>
</dbReference>
<dbReference type="Pfam" id="PF03841">
    <property type="entry name" value="SelA"/>
    <property type="match status" value="1"/>
</dbReference>
<dbReference type="SUPFAM" id="SSF53383">
    <property type="entry name" value="PLP-dependent transferases"/>
    <property type="match status" value="1"/>
</dbReference>
<keyword id="KW-0963">Cytoplasm</keyword>
<keyword id="KW-0648">Protein biosynthesis</keyword>
<keyword id="KW-0663">Pyridoxal phosphate</keyword>
<keyword id="KW-1185">Reference proteome</keyword>
<keyword id="KW-0711">Selenium</keyword>
<keyword id="KW-0808">Transferase</keyword>
<reference key="1">
    <citation type="journal article" date="2007" name="PLoS ONE">
        <title>The complete genome sequence and analysis of the Epsilonproteobacterium Arcobacter butzleri.</title>
        <authorList>
            <person name="Miller W.G."/>
            <person name="Parker C.T."/>
            <person name="Rubenfield M."/>
            <person name="Mendz G.L."/>
            <person name="Woesten M.M.S.M."/>
            <person name="Ussery D.W."/>
            <person name="Stolz J.F."/>
            <person name="Binnewies T.T."/>
            <person name="Hallin P.F."/>
            <person name="Wang G."/>
            <person name="Malek J.A."/>
            <person name="Rogosin A."/>
            <person name="Stanker L.H."/>
            <person name="Mandrell R.E."/>
        </authorList>
    </citation>
    <scope>NUCLEOTIDE SEQUENCE [LARGE SCALE GENOMIC DNA]</scope>
    <source>
        <strain>RM4018</strain>
    </source>
</reference>
<proteinExistence type="inferred from homology"/>
<evidence type="ECO:0000255" key="1">
    <source>
        <dbReference type="HAMAP-Rule" id="MF_00423"/>
    </source>
</evidence>
<accession>A8EV04</accession>
<name>SELA_ALIB4</name>
<protein>
    <recommendedName>
        <fullName evidence="1">L-seryl-tRNA(Sec) selenium transferase</fullName>
        <ecNumber evidence="1">2.9.1.1</ecNumber>
    </recommendedName>
    <alternativeName>
        <fullName evidence="1">Selenocysteine synthase</fullName>
        <shortName evidence="1">Sec synthase</shortName>
    </alternativeName>
    <alternativeName>
        <fullName evidence="1">Selenocysteinyl-tRNA(Sec) synthase</fullName>
    </alternativeName>
</protein>
<comment type="function">
    <text evidence="1">Converts seryl-tRNA(Sec) to selenocysteinyl-tRNA(Sec) required for selenoprotein biosynthesis.</text>
</comment>
<comment type="catalytic activity">
    <reaction evidence="1">
        <text>L-seryl-tRNA(Sec) + selenophosphate + H(+) = L-selenocysteinyl-tRNA(Sec) + phosphate</text>
        <dbReference type="Rhea" id="RHEA:22728"/>
        <dbReference type="Rhea" id="RHEA-COMP:9742"/>
        <dbReference type="Rhea" id="RHEA-COMP:9743"/>
        <dbReference type="ChEBI" id="CHEBI:15378"/>
        <dbReference type="ChEBI" id="CHEBI:16144"/>
        <dbReference type="ChEBI" id="CHEBI:43474"/>
        <dbReference type="ChEBI" id="CHEBI:78533"/>
        <dbReference type="ChEBI" id="CHEBI:78573"/>
        <dbReference type="EC" id="2.9.1.1"/>
    </reaction>
</comment>
<comment type="cofactor">
    <cofactor evidence="1">
        <name>pyridoxal 5'-phosphate</name>
        <dbReference type="ChEBI" id="CHEBI:597326"/>
    </cofactor>
</comment>
<comment type="pathway">
    <text evidence="1">Aminoacyl-tRNA biosynthesis; selenocysteinyl-tRNA(Sec) biosynthesis; selenocysteinyl-tRNA(Sec) from L-seryl-tRNA(Sec) (bacterial route): step 1/1.</text>
</comment>
<comment type="subcellular location">
    <subcellularLocation>
        <location evidence="1">Cytoplasm</location>
    </subcellularLocation>
</comment>
<comment type="similarity">
    <text evidence="1">Belongs to the SelA family.</text>
</comment>
<sequence length="451" mass="51011">MSLLKSIPKVDKFIMNEAFEGLSRTLITKIAKKTLEELRNDILNNKIEKIDENTLINEVLDSYKDLTSPSLKSLINATGIIVHTNLGRSLLDEKSLTKAIKIATTYNNLEYDLKKGKRGERYEHITKSLQALTSCEDAIVVNNNASAVFLILNTFCKNKEVIVSRGELVEIGGSFRVPEVMNQSGAKLKEIGTTNKTHLRDYENAICEKTSMLMKVHKSNYSIEGFSSEVSFEVIVKIAQQNNLIDYFDMGSGHIIDLPYNLNKDEPSILDIMKYKPSLLSFSGDKLFGSVQAGIIIGKKELIAKIKKNQLLRMLRVDKITLALLEETLNSYLKNELDSIPTLKMLNTKIETLEQRANNLKEKCENFIKCEVIKTSTMVGGGTTPNKKIPTIALTLEHKNYKPNKLEEILRKNSIISRIENDKVLLDFRTILESDCKKIEEILKNLFESTK</sequence>
<feature type="chain" id="PRO_1000060097" description="L-seryl-tRNA(Sec) selenium transferase">
    <location>
        <begin position="1"/>
        <end position="451"/>
    </location>
</feature>
<feature type="modified residue" description="N6-(pyridoxal phosphate)lysine" evidence="1">
    <location>
        <position position="286"/>
    </location>
</feature>